<protein>
    <recommendedName>
        <fullName evidence="2">Trehalose-6-phosphate synthase</fullName>
        <shortName evidence="2">TPS</shortName>
        <ecNumber evidence="2">2.4.1.15</ecNumber>
        <ecNumber evidence="2">2.4.1.347</ecNumber>
    </recommendedName>
    <alternativeName>
        <fullName evidence="2">Alpha,alpha-trehalose-phosphate synthase [UDP-forming]</fullName>
    </alternativeName>
    <alternativeName>
        <fullName evidence="1">Osmoregulatory trehalose synthesis protein A</fullName>
        <shortName evidence="1">OtsA</shortName>
    </alternativeName>
</protein>
<keyword id="KW-0328">Glycosyltransferase</keyword>
<keyword id="KW-1185">Reference proteome</keyword>
<keyword id="KW-0808">Transferase</keyword>
<dbReference type="EC" id="2.4.1.15" evidence="2"/>
<dbReference type="EC" id="2.4.1.347" evidence="2"/>
<dbReference type="EMBL" id="CP000854">
    <property type="protein sequence ID" value="ACC43382.1"/>
    <property type="molecule type" value="Genomic_DNA"/>
</dbReference>
<dbReference type="RefSeq" id="WP_012396503.1">
    <property type="nucleotide sequence ID" value="NC_010612.1"/>
</dbReference>
<dbReference type="SMR" id="B2HHY2"/>
<dbReference type="STRING" id="216594.MMAR_4978"/>
<dbReference type="CAZy" id="GT20">
    <property type="family name" value="Glycosyltransferase Family 20"/>
</dbReference>
<dbReference type="GeneID" id="34340145"/>
<dbReference type="KEGG" id="mmi:MMAR_4978"/>
<dbReference type="eggNOG" id="COG0380">
    <property type="taxonomic scope" value="Bacteria"/>
</dbReference>
<dbReference type="HOGENOM" id="CLU_002351_7_1_11"/>
<dbReference type="OrthoDB" id="9761633at2"/>
<dbReference type="UniPathway" id="UPA00299"/>
<dbReference type="Proteomes" id="UP000001190">
    <property type="component" value="Chromosome"/>
</dbReference>
<dbReference type="GO" id="GO:0005829">
    <property type="term" value="C:cytosol"/>
    <property type="evidence" value="ECO:0007669"/>
    <property type="project" value="TreeGrafter"/>
</dbReference>
<dbReference type="GO" id="GO:0047260">
    <property type="term" value="F:alpha,alpha-trehalose-phosphate synthase (GDP-forming) activity"/>
    <property type="evidence" value="ECO:0007669"/>
    <property type="project" value="RHEA"/>
</dbReference>
<dbReference type="GO" id="GO:0003825">
    <property type="term" value="F:alpha,alpha-trehalose-phosphate synthase (UDP-forming) activity"/>
    <property type="evidence" value="ECO:0007669"/>
    <property type="project" value="UniProtKB-EC"/>
</dbReference>
<dbReference type="GO" id="GO:0004805">
    <property type="term" value="F:trehalose-phosphatase activity"/>
    <property type="evidence" value="ECO:0007669"/>
    <property type="project" value="TreeGrafter"/>
</dbReference>
<dbReference type="GO" id="GO:0005992">
    <property type="term" value="P:trehalose biosynthetic process"/>
    <property type="evidence" value="ECO:0007669"/>
    <property type="project" value="UniProtKB-UniPathway"/>
</dbReference>
<dbReference type="CDD" id="cd03788">
    <property type="entry name" value="GT20_TPS"/>
    <property type="match status" value="1"/>
</dbReference>
<dbReference type="FunFam" id="3.40.50.2000:FF:000102">
    <property type="entry name" value="Trehalose-6-phosphate synthase"/>
    <property type="match status" value="1"/>
</dbReference>
<dbReference type="Gene3D" id="3.40.50.2000">
    <property type="entry name" value="Glycogen Phosphorylase B"/>
    <property type="match status" value="2"/>
</dbReference>
<dbReference type="InterPro" id="IPR001830">
    <property type="entry name" value="Glyco_trans_20"/>
</dbReference>
<dbReference type="PANTHER" id="PTHR10788:SF106">
    <property type="entry name" value="BCDNA.GH08860"/>
    <property type="match status" value="1"/>
</dbReference>
<dbReference type="PANTHER" id="PTHR10788">
    <property type="entry name" value="TREHALOSE-6-PHOSPHATE SYNTHASE"/>
    <property type="match status" value="1"/>
</dbReference>
<dbReference type="Pfam" id="PF00982">
    <property type="entry name" value="Glyco_transf_20"/>
    <property type="match status" value="1"/>
</dbReference>
<dbReference type="SUPFAM" id="SSF53756">
    <property type="entry name" value="UDP-Glycosyltransferase/glycogen phosphorylase"/>
    <property type="match status" value="1"/>
</dbReference>
<accession>B2HHY2</accession>
<comment type="function">
    <text evidence="2">Probably involved in the osmoprotection via the biosynthesis of trehalose and in the production of glycogen and alpha-glucan via the TreS-Pep2 branch involved in the biosynthesis of maltose-1-phosphate (M1P). Catalyzes the transfer of glucose from UDP-glucose (UDP-Glc) to D-glucose 6-phosphate (Glc-6-P) to form trehalose-6-phosphate. Probably also able to use ADP-Glc, CDP-Glc, GDP-Glc and TDP-Glc as glucosyl donors.</text>
</comment>
<comment type="catalytic activity">
    <reaction evidence="2">
        <text>ADP-alpha-D-glucose + D-glucose 6-phosphate = alpha,alpha-trehalose 6-phosphate + ADP + H(+)</text>
        <dbReference type="Rhea" id="RHEA:53880"/>
        <dbReference type="ChEBI" id="CHEBI:15378"/>
        <dbReference type="ChEBI" id="CHEBI:57498"/>
        <dbReference type="ChEBI" id="CHEBI:58429"/>
        <dbReference type="ChEBI" id="CHEBI:61548"/>
        <dbReference type="ChEBI" id="CHEBI:456216"/>
        <dbReference type="EC" id="2.4.1.347"/>
    </reaction>
</comment>
<comment type="catalytic activity">
    <reaction evidence="2">
        <text>CDP-alpha-D-glucose + D-glucose 6-phosphate = alpha,alpha-trehalose 6-phosphate + CDP + H(+)</text>
        <dbReference type="Rhea" id="RHEA:53884"/>
        <dbReference type="ChEBI" id="CHEBI:15378"/>
        <dbReference type="ChEBI" id="CHEBI:58069"/>
        <dbReference type="ChEBI" id="CHEBI:58429"/>
        <dbReference type="ChEBI" id="CHEBI:61548"/>
        <dbReference type="ChEBI" id="CHEBI:137927"/>
    </reaction>
</comment>
<comment type="catalytic activity">
    <reaction evidence="2">
        <text>GDP-alpha-D-glucose + D-glucose 6-phosphate = alpha,alpha-trehalose 6-phosphate + GDP + H(+)</text>
        <dbReference type="Rhea" id="RHEA:14605"/>
        <dbReference type="ChEBI" id="CHEBI:15378"/>
        <dbReference type="ChEBI" id="CHEBI:58189"/>
        <dbReference type="ChEBI" id="CHEBI:58429"/>
        <dbReference type="ChEBI" id="CHEBI:61548"/>
        <dbReference type="ChEBI" id="CHEBI:62230"/>
    </reaction>
</comment>
<comment type="catalytic activity">
    <reaction evidence="2">
        <text>TDP-alpha-D-glucose + D-glucose 6-phosphate = 5-methyl-UDP + alpha,alpha-trehalose 6-phosphate + H(+)</text>
        <dbReference type="Rhea" id="RHEA:53888"/>
        <dbReference type="ChEBI" id="CHEBI:15378"/>
        <dbReference type="ChEBI" id="CHEBI:58429"/>
        <dbReference type="ChEBI" id="CHEBI:61417"/>
        <dbReference type="ChEBI" id="CHEBI:61548"/>
        <dbReference type="ChEBI" id="CHEBI:137931"/>
    </reaction>
</comment>
<comment type="catalytic activity">
    <reaction evidence="2">
        <text>D-glucose 6-phosphate + UDP-alpha-D-glucose = alpha,alpha-trehalose 6-phosphate + UDP + H(+)</text>
        <dbReference type="Rhea" id="RHEA:18889"/>
        <dbReference type="ChEBI" id="CHEBI:15378"/>
        <dbReference type="ChEBI" id="CHEBI:58223"/>
        <dbReference type="ChEBI" id="CHEBI:58429"/>
        <dbReference type="ChEBI" id="CHEBI:58885"/>
        <dbReference type="ChEBI" id="CHEBI:61548"/>
        <dbReference type="EC" id="2.4.1.15"/>
    </reaction>
</comment>
<comment type="pathway">
    <text evidence="2">Glycan biosynthesis; trehalose biosynthesis.</text>
</comment>
<comment type="subunit">
    <text evidence="2">Homotetramer.</text>
</comment>
<comment type="similarity">
    <text evidence="2">Belongs to the glycosyltransferase 20 family.</text>
</comment>
<sequence length="500" mass="56114">MGPGGRQSAEPASTEVFGDSDFVVVANRLPVDQERLPDGTIAWKRSPGGLVTALEPLLRRRRGAWVGWAGVVENDVDVQDEPIVQDELQLQPVRLSADDVAQYYEGFSNATLWPLYHDVIVRPIYHREWWDRYVDVNRRFAEATARAAARGGTVWVQDYQLQLVPKMLRAMRPDLTIGFFLHIPFPPVELFMQLPWRTEIIQGLLGADLVGFHLPGGAQNFLILSRRLVGADTSRGTVGVRSRFGEVILGSRTIRVGAFPISIDSGALDQTARDRNIRRRSREIRAELGNPRKILLGVDRLDYTKGIDVRLKAFSELLAEGRVKRDDTVLVQLATPSRERVESYQTLRNDIERQVGHINGEYAEVGHPVVHYLHRPVPRNELIAFFVASDVMLVTPLRDGMNLVAKEYVACRSDLGGALVLSEFTGAAAELRHAYLVNPHDLEGVKDGIEEALNQTEEAGRRRMRSMRRQVLAHDVDRWARSFLDALADSRPNDSADAAD</sequence>
<proteinExistence type="inferred from homology"/>
<feature type="chain" id="PRO_0000348908" description="Trehalose-6-phosphate synthase">
    <location>
        <begin position="1"/>
        <end position="500"/>
    </location>
</feature>
<feature type="binding site" evidence="1">
    <location>
        <position position="28"/>
    </location>
    <ligand>
        <name>D-glucose 6-phosphate</name>
        <dbReference type="ChEBI" id="CHEBI:61548"/>
    </ligand>
</feature>
<feature type="binding site" evidence="1">
    <location>
        <begin position="48"/>
        <end position="49"/>
    </location>
    <ligand>
        <name>UDP-alpha-D-glucose</name>
        <dbReference type="ChEBI" id="CHEBI:58885"/>
    </ligand>
</feature>
<feature type="binding site" evidence="1">
    <location>
        <position position="104"/>
    </location>
    <ligand>
        <name>D-glucose 6-phosphate</name>
        <dbReference type="ChEBI" id="CHEBI:61548"/>
    </ligand>
</feature>
<feature type="binding site" evidence="1">
    <location>
        <position position="158"/>
    </location>
    <ligand>
        <name>D-glucose 6-phosphate</name>
        <dbReference type="ChEBI" id="CHEBI:61548"/>
    </ligand>
</feature>
<feature type="binding site" evidence="1">
    <location>
        <position position="300"/>
    </location>
    <ligand>
        <name>UDP-alpha-D-glucose</name>
        <dbReference type="ChEBI" id="CHEBI:58885"/>
    </ligand>
</feature>
<feature type="binding site" evidence="1">
    <location>
        <position position="305"/>
    </location>
    <ligand>
        <name>UDP-alpha-D-glucose</name>
        <dbReference type="ChEBI" id="CHEBI:58885"/>
    </ligand>
</feature>
<feature type="binding site" evidence="1">
    <location>
        <position position="338"/>
    </location>
    <ligand>
        <name>D-glucose 6-phosphate</name>
        <dbReference type="ChEBI" id="CHEBI:61548"/>
    </ligand>
</feature>
<feature type="binding site" evidence="1">
    <location>
        <begin position="403"/>
        <end position="407"/>
    </location>
    <ligand>
        <name>UDP-alpha-D-glucose</name>
        <dbReference type="ChEBI" id="CHEBI:58885"/>
    </ligand>
</feature>
<feature type="site" description="Involved in alpha anomer selectivity" evidence="1">
    <location>
        <position position="113"/>
    </location>
</feature>
<feature type="site" description="Involved in alpha anomer selectivity" evidence="1">
    <location>
        <position position="183"/>
    </location>
</feature>
<gene>
    <name evidence="2" type="primary">otsA</name>
    <name type="ordered locus">MMAR_4978</name>
</gene>
<organism>
    <name type="scientific">Mycobacterium marinum (strain ATCC BAA-535 / M)</name>
    <dbReference type="NCBI Taxonomy" id="216594"/>
    <lineage>
        <taxon>Bacteria</taxon>
        <taxon>Bacillati</taxon>
        <taxon>Actinomycetota</taxon>
        <taxon>Actinomycetes</taxon>
        <taxon>Mycobacteriales</taxon>
        <taxon>Mycobacteriaceae</taxon>
        <taxon>Mycobacterium</taxon>
        <taxon>Mycobacterium ulcerans group</taxon>
    </lineage>
</organism>
<reference key="1">
    <citation type="journal article" date="2008" name="Genome Res.">
        <title>Insights from the complete genome sequence of Mycobacterium marinum on the evolution of Mycobacterium tuberculosis.</title>
        <authorList>
            <person name="Stinear T.P."/>
            <person name="Seemann T."/>
            <person name="Harrison P.F."/>
            <person name="Jenkin G.A."/>
            <person name="Davies J.K."/>
            <person name="Johnson P.D."/>
            <person name="Abdellah Z."/>
            <person name="Arrowsmith C."/>
            <person name="Chillingworth T."/>
            <person name="Churcher C."/>
            <person name="Clarke K."/>
            <person name="Cronin A."/>
            <person name="Davis P."/>
            <person name="Goodhead I."/>
            <person name="Holroyd N."/>
            <person name="Jagels K."/>
            <person name="Lord A."/>
            <person name="Moule S."/>
            <person name="Mungall K."/>
            <person name="Norbertczak H."/>
            <person name="Quail M.A."/>
            <person name="Rabbinowitsch E."/>
            <person name="Walker D."/>
            <person name="White B."/>
            <person name="Whitehead S."/>
            <person name="Small P.L."/>
            <person name="Brosch R."/>
            <person name="Ramakrishnan L."/>
            <person name="Fischbach M.A."/>
            <person name="Parkhill J."/>
            <person name="Cole S.T."/>
        </authorList>
    </citation>
    <scope>NUCLEOTIDE SEQUENCE [LARGE SCALE GENOMIC DNA]</scope>
    <source>
        <strain>ATCC BAA-535 / M</strain>
    </source>
</reference>
<evidence type="ECO:0000250" key="1">
    <source>
        <dbReference type="UniProtKB" id="P31677"/>
    </source>
</evidence>
<evidence type="ECO:0000250" key="2">
    <source>
        <dbReference type="UniProtKB" id="P9WN11"/>
    </source>
</evidence>
<name>OTSA_MYCMM</name>